<protein>
    <recommendedName>
        <fullName evidence="1">2,3-bisphosphoglycerate-independent phosphoglycerate mutase</fullName>
        <shortName evidence="1">BPG-independent PGAM</shortName>
        <shortName evidence="1">Phosphoglyceromutase</shortName>
        <shortName evidence="1">iPGM</shortName>
        <ecNumber evidence="1">5.4.2.12</ecNumber>
    </recommendedName>
</protein>
<comment type="function">
    <text evidence="1">Catalyzes the interconversion of 2-phosphoglycerate and 3-phosphoglycerate.</text>
</comment>
<comment type="catalytic activity">
    <reaction evidence="1">
        <text>(2R)-2-phosphoglycerate = (2R)-3-phosphoglycerate</text>
        <dbReference type="Rhea" id="RHEA:15901"/>
        <dbReference type="ChEBI" id="CHEBI:58272"/>
        <dbReference type="ChEBI" id="CHEBI:58289"/>
        <dbReference type="EC" id="5.4.2.12"/>
    </reaction>
</comment>
<comment type="cofactor">
    <cofactor evidence="1">
        <name>Mn(2+)</name>
        <dbReference type="ChEBI" id="CHEBI:29035"/>
    </cofactor>
    <text evidence="1">Binds 2 manganese ions per subunit.</text>
</comment>
<comment type="pathway">
    <text evidence="1">Carbohydrate degradation; glycolysis; pyruvate from D-glyceraldehyde 3-phosphate: step 3/5.</text>
</comment>
<comment type="similarity">
    <text evidence="1">Belongs to the BPG-independent phosphoglycerate mutase family.</text>
</comment>
<dbReference type="EC" id="5.4.2.12" evidence="1"/>
<dbReference type="EMBL" id="CP000300">
    <property type="protein sequence ID" value="ABE52796.1"/>
    <property type="molecule type" value="Genomic_DNA"/>
</dbReference>
<dbReference type="RefSeq" id="WP_011499939.1">
    <property type="nucleotide sequence ID" value="NC_007955.1"/>
</dbReference>
<dbReference type="SMR" id="Q12UT0"/>
<dbReference type="STRING" id="259564.Mbur_1914"/>
<dbReference type="GeneID" id="3997706"/>
<dbReference type="KEGG" id="mbu:Mbur_1914"/>
<dbReference type="HOGENOM" id="CLU_026099_2_0_2"/>
<dbReference type="OrthoDB" id="146005at2157"/>
<dbReference type="UniPathway" id="UPA00109">
    <property type="reaction ID" value="UER00186"/>
</dbReference>
<dbReference type="Proteomes" id="UP000001979">
    <property type="component" value="Chromosome"/>
</dbReference>
<dbReference type="GO" id="GO:0005737">
    <property type="term" value="C:cytoplasm"/>
    <property type="evidence" value="ECO:0007669"/>
    <property type="project" value="InterPro"/>
</dbReference>
<dbReference type="GO" id="GO:0030145">
    <property type="term" value="F:manganese ion binding"/>
    <property type="evidence" value="ECO:0007669"/>
    <property type="project" value="UniProtKB-UniRule"/>
</dbReference>
<dbReference type="GO" id="GO:0004619">
    <property type="term" value="F:phosphoglycerate mutase activity"/>
    <property type="evidence" value="ECO:0007669"/>
    <property type="project" value="UniProtKB-EC"/>
</dbReference>
<dbReference type="GO" id="GO:0006007">
    <property type="term" value="P:glucose catabolic process"/>
    <property type="evidence" value="ECO:0007669"/>
    <property type="project" value="InterPro"/>
</dbReference>
<dbReference type="GO" id="GO:0006096">
    <property type="term" value="P:glycolytic process"/>
    <property type="evidence" value="ECO:0007669"/>
    <property type="project" value="UniProtKB-UniRule"/>
</dbReference>
<dbReference type="CDD" id="cd16010">
    <property type="entry name" value="iPGM"/>
    <property type="match status" value="1"/>
</dbReference>
<dbReference type="FunFam" id="3.40.1450.10:FF:000001">
    <property type="entry name" value="2,3-bisphosphoglycerate-independent phosphoglycerate mutase"/>
    <property type="match status" value="1"/>
</dbReference>
<dbReference type="Gene3D" id="3.40.720.10">
    <property type="entry name" value="Alkaline Phosphatase, subunit A"/>
    <property type="match status" value="1"/>
</dbReference>
<dbReference type="Gene3D" id="3.40.1450.10">
    <property type="entry name" value="BPG-independent phosphoglycerate mutase, domain B"/>
    <property type="match status" value="1"/>
</dbReference>
<dbReference type="HAMAP" id="MF_01038">
    <property type="entry name" value="GpmI"/>
    <property type="match status" value="1"/>
</dbReference>
<dbReference type="InterPro" id="IPR017850">
    <property type="entry name" value="Alkaline_phosphatase_core_sf"/>
</dbReference>
<dbReference type="InterPro" id="IPR011258">
    <property type="entry name" value="BPG-indep_PGM_N"/>
</dbReference>
<dbReference type="InterPro" id="IPR006124">
    <property type="entry name" value="Metalloenzyme"/>
</dbReference>
<dbReference type="InterPro" id="IPR036646">
    <property type="entry name" value="PGAM_B_sf"/>
</dbReference>
<dbReference type="InterPro" id="IPR005995">
    <property type="entry name" value="Pgm_bpd_ind"/>
</dbReference>
<dbReference type="NCBIfam" id="TIGR01307">
    <property type="entry name" value="pgm_bpd_ind"/>
    <property type="match status" value="1"/>
</dbReference>
<dbReference type="PANTHER" id="PTHR31637">
    <property type="entry name" value="2,3-BISPHOSPHOGLYCERATE-INDEPENDENT PHOSPHOGLYCERATE MUTASE"/>
    <property type="match status" value="1"/>
</dbReference>
<dbReference type="PANTHER" id="PTHR31637:SF0">
    <property type="entry name" value="2,3-BISPHOSPHOGLYCERATE-INDEPENDENT PHOSPHOGLYCERATE MUTASE"/>
    <property type="match status" value="1"/>
</dbReference>
<dbReference type="Pfam" id="PF06415">
    <property type="entry name" value="iPGM_N"/>
    <property type="match status" value="1"/>
</dbReference>
<dbReference type="Pfam" id="PF01676">
    <property type="entry name" value="Metalloenzyme"/>
    <property type="match status" value="1"/>
</dbReference>
<dbReference type="PIRSF" id="PIRSF001492">
    <property type="entry name" value="IPGAM"/>
    <property type="match status" value="1"/>
</dbReference>
<dbReference type="SUPFAM" id="SSF64158">
    <property type="entry name" value="2,3-Bisphosphoglycerate-independent phosphoglycerate mutase, substrate-binding domain"/>
    <property type="match status" value="1"/>
</dbReference>
<dbReference type="SUPFAM" id="SSF53649">
    <property type="entry name" value="Alkaline phosphatase-like"/>
    <property type="match status" value="1"/>
</dbReference>
<feature type="chain" id="PRO_1000063981" description="2,3-bisphosphoglycerate-independent phosphoglycerate mutase">
    <location>
        <begin position="1"/>
        <end position="518"/>
    </location>
</feature>
<feature type="active site" description="Phosphoserine intermediate" evidence="1">
    <location>
        <position position="64"/>
    </location>
</feature>
<feature type="binding site" evidence="1">
    <location>
        <position position="14"/>
    </location>
    <ligand>
        <name>Mn(2+)</name>
        <dbReference type="ChEBI" id="CHEBI:29035"/>
        <label>2</label>
    </ligand>
</feature>
<feature type="binding site" evidence="1">
    <location>
        <position position="64"/>
    </location>
    <ligand>
        <name>Mn(2+)</name>
        <dbReference type="ChEBI" id="CHEBI:29035"/>
        <label>2</label>
    </ligand>
</feature>
<feature type="binding site" evidence="1">
    <location>
        <position position="125"/>
    </location>
    <ligand>
        <name>substrate</name>
    </ligand>
</feature>
<feature type="binding site" evidence="1">
    <location>
        <begin position="155"/>
        <end position="156"/>
    </location>
    <ligand>
        <name>substrate</name>
    </ligand>
</feature>
<feature type="binding site" evidence="1">
    <location>
        <position position="187"/>
    </location>
    <ligand>
        <name>substrate</name>
    </ligand>
</feature>
<feature type="binding site" evidence="1">
    <location>
        <position position="193"/>
    </location>
    <ligand>
        <name>substrate</name>
    </ligand>
</feature>
<feature type="binding site" evidence="1">
    <location>
        <begin position="264"/>
        <end position="267"/>
    </location>
    <ligand>
        <name>substrate</name>
    </ligand>
</feature>
<feature type="binding site" evidence="1">
    <location>
        <position position="337"/>
    </location>
    <ligand>
        <name>substrate</name>
    </ligand>
</feature>
<feature type="binding site" evidence="1">
    <location>
        <position position="404"/>
    </location>
    <ligand>
        <name>Mn(2+)</name>
        <dbReference type="ChEBI" id="CHEBI:29035"/>
        <label>1</label>
    </ligand>
</feature>
<feature type="binding site" evidence="1">
    <location>
        <position position="408"/>
    </location>
    <ligand>
        <name>Mn(2+)</name>
        <dbReference type="ChEBI" id="CHEBI:29035"/>
        <label>1</label>
    </ligand>
</feature>
<feature type="binding site" evidence="1">
    <location>
        <position position="445"/>
    </location>
    <ligand>
        <name>Mn(2+)</name>
        <dbReference type="ChEBI" id="CHEBI:29035"/>
        <label>2</label>
    </ligand>
</feature>
<feature type="binding site" evidence="1">
    <location>
        <position position="446"/>
    </location>
    <ligand>
        <name>Mn(2+)</name>
        <dbReference type="ChEBI" id="CHEBI:29035"/>
        <label>2</label>
    </ligand>
</feature>
<feature type="binding site" evidence="1">
    <location>
        <position position="467"/>
    </location>
    <ligand>
        <name>Mn(2+)</name>
        <dbReference type="ChEBI" id="CHEBI:29035"/>
        <label>1</label>
    </ligand>
</feature>
<proteinExistence type="inferred from homology"/>
<evidence type="ECO:0000255" key="1">
    <source>
        <dbReference type="HAMAP-Rule" id="MF_01038"/>
    </source>
</evidence>
<name>GPMI_METBU</name>
<organism>
    <name type="scientific">Methanococcoides burtonii (strain DSM 6242 / NBRC 107633 / OCM 468 / ACE-M)</name>
    <dbReference type="NCBI Taxonomy" id="259564"/>
    <lineage>
        <taxon>Archaea</taxon>
        <taxon>Methanobacteriati</taxon>
        <taxon>Methanobacteriota</taxon>
        <taxon>Stenosarchaea group</taxon>
        <taxon>Methanomicrobia</taxon>
        <taxon>Methanosarcinales</taxon>
        <taxon>Methanosarcinaceae</taxon>
        <taxon>Methanococcoides</taxon>
    </lineage>
</organism>
<gene>
    <name evidence="1" type="primary">gpmI</name>
    <name type="ordered locus">Mbur_1914</name>
</gene>
<sequence>MNFTKRPFLLTILDGWGYSPEVEGNAIHAANTPNLDDLLETYPNTLLSASGEDVGLPEGQMGNSEVGHLNIGAGRVVYQDLTRINRDIGNGDFFKNPVLKQAIENAKAQGSALHLMGLFSYGGVHSHMKHLRALIEFAKDEGITEIFIHAFLDGRDVSPRAALEDMKEHVEYCNNLSVGKIATVSGRYYAMDRDNRWDRTEDAYNAITRGDGVYYSKGPVDAISEGYGRGENDEFIKPTVIVDENGRPIGRMNENDTVIFFNFRPDRARQLTYAFVNDEFDNFERKSHPKVHFVCMTEYDEKLEVPIAFPSEELKNTLGEVLSKEGIKQLRIAETEKYAHVTFFFNGGVEKQNEGEERCLIPSPKVATYDLKPEMSAYEVTEELIERIGSGKYDVIVLNLANMDMVGHSGIMEAAVKAVEVVDDCVGKIITAIKEVGGEAMVMADHGNAEKMVEFCNNTERQCYTAHTSNPVRCIYVTQEKRVELQKGRLSDVAPTILKIMGIEKPPEMTGVPLIKNT</sequence>
<reference key="1">
    <citation type="journal article" date="2009" name="ISME J.">
        <title>The genome sequence of the psychrophilic archaeon, Methanococcoides burtonii: the role of genome evolution in cold adaptation.</title>
        <authorList>
            <person name="Allen M.A."/>
            <person name="Lauro F.M."/>
            <person name="Williams T.J."/>
            <person name="Burg D."/>
            <person name="Siddiqui K.S."/>
            <person name="De Francisci D."/>
            <person name="Chong K.W."/>
            <person name="Pilak O."/>
            <person name="Chew H.H."/>
            <person name="De Maere M.Z."/>
            <person name="Ting L."/>
            <person name="Katrib M."/>
            <person name="Ng C."/>
            <person name="Sowers K.R."/>
            <person name="Galperin M.Y."/>
            <person name="Anderson I.J."/>
            <person name="Ivanova N."/>
            <person name="Dalin E."/>
            <person name="Martinez M."/>
            <person name="Lapidus A."/>
            <person name="Hauser L."/>
            <person name="Land M."/>
            <person name="Thomas T."/>
            <person name="Cavicchioli R."/>
        </authorList>
    </citation>
    <scope>NUCLEOTIDE SEQUENCE [LARGE SCALE GENOMIC DNA]</scope>
    <source>
        <strain>DSM 6242 / NBRC 107633 / OCM 468 / ACE-M</strain>
    </source>
</reference>
<accession>Q12UT0</accession>
<keyword id="KW-0324">Glycolysis</keyword>
<keyword id="KW-0413">Isomerase</keyword>
<keyword id="KW-0464">Manganese</keyword>
<keyword id="KW-0479">Metal-binding</keyword>